<gene>
    <name evidence="1" type="primary">ilvC</name>
    <name type="ordered locus">Tpet_0370</name>
</gene>
<keyword id="KW-0028">Amino-acid biosynthesis</keyword>
<keyword id="KW-0100">Branched-chain amino acid biosynthesis</keyword>
<keyword id="KW-0460">Magnesium</keyword>
<keyword id="KW-0479">Metal-binding</keyword>
<keyword id="KW-0521">NADP</keyword>
<keyword id="KW-0560">Oxidoreductase</keyword>
<organism>
    <name type="scientific">Thermotoga petrophila (strain ATCC BAA-488 / DSM 13995 / JCM 10881 / RKU-1)</name>
    <dbReference type="NCBI Taxonomy" id="390874"/>
    <lineage>
        <taxon>Bacteria</taxon>
        <taxon>Thermotogati</taxon>
        <taxon>Thermotogota</taxon>
        <taxon>Thermotogae</taxon>
        <taxon>Thermotogales</taxon>
        <taxon>Thermotogaceae</taxon>
        <taxon>Thermotoga</taxon>
    </lineage>
</organism>
<comment type="function">
    <text evidence="1">Involved in the biosynthesis of branched-chain amino acids (BCAA). Catalyzes an alkyl-migration followed by a ketol-acid reduction of (S)-2-acetolactate (S2AL) to yield (R)-2,3-dihydroxy-isovalerate. In the isomerase reaction, S2AL is rearranged via a Mg-dependent methyl migration to produce 3-hydroxy-3-methyl-2-ketobutyrate (HMKB). In the reductase reaction, this 2-ketoacid undergoes a metal-dependent reduction by NADPH to yield (R)-2,3-dihydroxy-isovalerate.</text>
</comment>
<comment type="catalytic activity">
    <reaction evidence="1">
        <text>(2R)-2,3-dihydroxy-3-methylbutanoate + NADP(+) = (2S)-2-acetolactate + NADPH + H(+)</text>
        <dbReference type="Rhea" id="RHEA:22068"/>
        <dbReference type="ChEBI" id="CHEBI:15378"/>
        <dbReference type="ChEBI" id="CHEBI:49072"/>
        <dbReference type="ChEBI" id="CHEBI:57783"/>
        <dbReference type="ChEBI" id="CHEBI:58349"/>
        <dbReference type="ChEBI" id="CHEBI:58476"/>
        <dbReference type="EC" id="1.1.1.86"/>
    </reaction>
</comment>
<comment type="catalytic activity">
    <reaction evidence="1">
        <text>(2R,3R)-2,3-dihydroxy-3-methylpentanoate + NADP(+) = (S)-2-ethyl-2-hydroxy-3-oxobutanoate + NADPH + H(+)</text>
        <dbReference type="Rhea" id="RHEA:13493"/>
        <dbReference type="ChEBI" id="CHEBI:15378"/>
        <dbReference type="ChEBI" id="CHEBI:49256"/>
        <dbReference type="ChEBI" id="CHEBI:49258"/>
        <dbReference type="ChEBI" id="CHEBI:57783"/>
        <dbReference type="ChEBI" id="CHEBI:58349"/>
        <dbReference type="EC" id="1.1.1.86"/>
    </reaction>
</comment>
<comment type="cofactor">
    <cofactor evidence="1">
        <name>Mg(2+)</name>
        <dbReference type="ChEBI" id="CHEBI:18420"/>
    </cofactor>
    <text evidence="1">Binds 2 magnesium ions per subunit.</text>
</comment>
<comment type="pathway">
    <text evidence="1">Amino-acid biosynthesis; L-isoleucine biosynthesis; L-isoleucine from 2-oxobutanoate: step 2/4.</text>
</comment>
<comment type="pathway">
    <text evidence="1">Amino-acid biosynthesis; L-valine biosynthesis; L-valine from pyruvate: step 2/4.</text>
</comment>
<comment type="similarity">
    <text evidence="1">Belongs to the ketol-acid reductoisomerase family.</text>
</comment>
<reference key="1">
    <citation type="submission" date="2007-05" db="EMBL/GenBank/DDBJ databases">
        <title>Complete sequence of Thermotoga petrophila RKU-1.</title>
        <authorList>
            <consortium name="US DOE Joint Genome Institute"/>
            <person name="Copeland A."/>
            <person name="Lucas S."/>
            <person name="Lapidus A."/>
            <person name="Barry K."/>
            <person name="Glavina del Rio T."/>
            <person name="Dalin E."/>
            <person name="Tice H."/>
            <person name="Pitluck S."/>
            <person name="Sims D."/>
            <person name="Brettin T."/>
            <person name="Bruce D."/>
            <person name="Detter J.C."/>
            <person name="Han C."/>
            <person name="Tapia R."/>
            <person name="Schmutz J."/>
            <person name="Larimer F."/>
            <person name="Land M."/>
            <person name="Hauser L."/>
            <person name="Kyrpides N."/>
            <person name="Mikhailova N."/>
            <person name="Nelson K."/>
            <person name="Gogarten J.P."/>
            <person name="Noll K."/>
            <person name="Richardson P."/>
        </authorList>
    </citation>
    <scope>NUCLEOTIDE SEQUENCE [LARGE SCALE GENOMIC DNA]</scope>
    <source>
        <strain>ATCC BAA-488 / DSM 13995 / JCM 10881 / RKU-1</strain>
    </source>
</reference>
<protein>
    <recommendedName>
        <fullName evidence="1">Ketol-acid reductoisomerase (NADP(+))</fullName>
        <shortName evidence="1">KARI</shortName>
        <ecNumber evidence="1">1.1.1.86</ecNumber>
    </recommendedName>
    <alternativeName>
        <fullName evidence="1">Acetohydroxy-acid isomeroreductase</fullName>
        <shortName evidence="1">AHIR</shortName>
    </alternativeName>
    <alternativeName>
        <fullName evidence="1">Alpha-keto-beta-hydroxylacyl reductoisomerase</fullName>
    </alternativeName>
    <alternativeName>
        <fullName evidence="1">Ketol-acid reductoisomerase type 1</fullName>
    </alternativeName>
    <alternativeName>
        <fullName evidence="1">Ketol-acid reductoisomerase type I</fullName>
    </alternativeName>
</protein>
<feature type="chain" id="PRO_1000050587" description="Ketol-acid reductoisomerase (NADP(+))">
    <location>
        <begin position="1"/>
        <end position="336"/>
    </location>
</feature>
<feature type="domain" description="KARI N-terminal Rossmann" evidence="2">
    <location>
        <begin position="1"/>
        <end position="182"/>
    </location>
</feature>
<feature type="domain" description="KARI C-terminal knotted" evidence="3">
    <location>
        <begin position="183"/>
        <end position="328"/>
    </location>
</feature>
<feature type="active site" evidence="1">
    <location>
        <position position="108"/>
    </location>
</feature>
<feature type="binding site" evidence="1">
    <location>
        <begin position="25"/>
        <end position="28"/>
    </location>
    <ligand>
        <name>NADP(+)</name>
        <dbReference type="ChEBI" id="CHEBI:58349"/>
    </ligand>
</feature>
<feature type="binding site" evidence="1">
    <location>
        <position position="48"/>
    </location>
    <ligand>
        <name>NADP(+)</name>
        <dbReference type="ChEBI" id="CHEBI:58349"/>
    </ligand>
</feature>
<feature type="binding site" evidence="1">
    <location>
        <position position="51"/>
    </location>
    <ligand>
        <name>NADP(+)</name>
        <dbReference type="ChEBI" id="CHEBI:58349"/>
    </ligand>
</feature>
<feature type="binding site" evidence="1">
    <location>
        <position position="53"/>
    </location>
    <ligand>
        <name>NADP(+)</name>
        <dbReference type="ChEBI" id="CHEBI:58349"/>
    </ligand>
</feature>
<feature type="binding site" evidence="1">
    <location>
        <begin position="83"/>
        <end position="86"/>
    </location>
    <ligand>
        <name>NADP(+)</name>
        <dbReference type="ChEBI" id="CHEBI:58349"/>
    </ligand>
</feature>
<feature type="binding site" evidence="1">
    <location>
        <position position="134"/>
    </location>
    <ligand>
        <name>NADP(+)</name>
        <dbReference type="ChEBI" id="CHEBI:58349"/>
    </ligand>
</feature>
<feature type="binding site" evidence="1">
    <location>
        <position position="191"/>
    </location>
    <ligand>
        <name>Mg(2+)</name>
        <dbReference type="ChEBI" id="CHEBI:18420"/>
        <label>1</label>
    </ligand>
</feature>
<feature type="binding site" evidence="1">
    <location>
        <position position="191"/>
    </location>
    <ligand>
        <name>Mg(2+)</name>
        <dbReference type="ChEBI" id="CHEBI:18420"/>
        <label>2</label>
    </ligand>
</feature>
<feature type="binding site" evidence="1">
    <location>
        <position position="195"/>
    </location>
    <ligand>
        <name>Mg(2+)</name>
        <dbReference type="ChEBI" id="CHEBI:18420"/>
        <label>1</label>
    </ligand>
</feature>
<feature type="binding site" evidence="1">
    <location>
        <position position="227"/>
    </location>
    <ligand>
        <name>Mg(2+)</name>
        <dbReference type="ChEBI" id="CHEBI:18420"/>
        <label>2</label>
    </ligand>
</feature>
<feature type="binding site" evidence="1">
    <location>
        <position position="231"/>
    </location>
    <ligand>
        <name>Mg(2+)</name>
        <dbReference type="ChEBI" id="CHEBI:18420"/>
        <label>2</label>
    </ligand>
</feature>
<feature type="binding site" evidence="1">
    <location>
        <position position="252"/>
    </location>
    <ligand>
        <name>substrate</name>
    </ligand>
</feature>
<proteinExistence type="inferred from homology"/>
<evidence type="ECO:0000255" key="1">
    <source>
        <dbReference type="HAMAP-Rule" id="MF_00435"/>
    </source>
</evidence>
<evidence type="ECO:0000255" key="2">
    <source>
        <dbReference type="PROSITE-ProRule" id="PRU01197"/>
    </source>
</evidence>
<evidence type="ECO:0000255" key="3">
    <source>
        <dbReference type="PROSITE-ProRule" id="PRU01198"/>
    </source>
</evidence>
<dbReference type="EC" id="1.1.1.86" evidence="1"/>
<dbReference type="EMBL" id="CP000702">
    <property type="protein sequence ID" value="ABQ46398.1"/>
    <property type="molecule type" value="Genomic_DNA"/>
</dbReference>
<dbReference type="RefSeq" id="WP_011943031.1">
    <property type="nucleotide sequence ID" value="NC_009486.1"/>
</dbReference>
<dbReference type="SMR" id="A5IJM5"/>
<dbReference type="STRING" id="390874.Tpet_0370"/>
<dbReference type="KEGG" id="tpt:Tpet_0370"/>
<dbReference type="eggNOG" id="COG0059">
    <property type="taxonomic scope" value="Bacteria"/>
</dbReference>
<dbReference type="HOGENOM" id="CLU_033821_0_1_0"/>
<dbReference type="UniPathway" id="UPA00047">
    <property type="reaction ID" value="UER00056"/>
</dbReference>
<dbReference type="UniPathway" id="UPA00049">
    <property type="reaction ID" value="UER00060"/>
</dbReference>
<dbReference type="Proteomes" id="UP000006558">
    <property type="component" value="Chromosome"/>
</dbReference>
<dbReference type="GO" id="GO:0005829">
    <property type="term" value="C:cytosol"/>
    <property type="evidence" value="ECO:0007669"/>
    <property type="project" value="TreeGrafter"/>
</dbReference>
<dbReference type="GO" id="GO:0004455">
    <property type="term" value="F:ketol-acid reductoisomerase activity"/>
    <property type="evidence" value="ECO:0007669"/>
    <property type="project" value="UniProtKB-UniRule"/>
</dbReference>
<dbReference type="GO" id="GO:0000287">
    <property type="term" value="F:magnesium ion binding"/>
    <property type="evidence" value="ECO:0007669"/>
    <property type="project" value="UniProtKB-UniRule"/>
</dbReference>
<dbReference type="GO" id="GO:0050661">
    <property type="term" value="F:NADP binding"/>
    <property type="evidence" value="ECO:0007669"/>
    <property type="project" value="InterPro"/>
</dbReference>
<dbReference type="GO" id="GO:0009097">
    <property type="term" value="P:isoleucine biosynthetic process"/>
    <property type="evidence" value="ECO:0007669"/>
    <property type="project" value="UniProtKB-UniRule"/>
</dbReference>
<dbReference type="GO" id="GO:0009099">
    <property type="term" value="P:L-valine biosynthetic process"/>
    <property type="evidence" value="ECO:0007669"/>
    <property type="project" value="UniProtKB-UniRule"/>
</dbReference>
<dbReference type="FunFam" id="3.40.50.720:FF:000023">
    <property type="entry name" value="Ketol-acid reductoisomerase (NADP(+))"/>
    <property type="match status" value="1"/>
</dbReference>
<dbReference type="Gene3D" id="6.10.240.10">
    <property type="match status" value="1"/>
</dbReference>
<dbReference type="Gene3D" id="3.40.50.720">
    <property type="entry name" value="NAD(P)-binding Rossmann-like Domain"/>
    <property type="match status" value="1"/>
</dbReference>
<dbReference type="HAMAP" id="MF_00435">
    <property type="entry name" value="IlvC"/>
    <property type="match status" value="1"/>
</dbReference>
<dbReference type="InterPro" id="IPR008927">
    <property type="entry name" value="6-PGluconate_DH-like_C_sf"/>
</dbReference>
<dbReference type="InterPro" id="IPR013023">
    <property type="entry name" value="KARI"/>
</dbReference>
<dbReference type="InterPro" id="IPR000506">
    <property type="entry name" value="KARI_C"/>
</dbReference>
<dbReference type="InterPro" id="IPR013116">
    <property type="entry name" value="KARI_N"/>
</dbReference>
<dbReference type="InterPro" id="IPR014359">
    <property type="entry name" value="KARI_prok"/>
</dbReference>
<dbReference type="InterPro" id="IPR036291">
    <property type="entry name" value="NAD(P)-bd_dom_sf"/>
</dbReference>
<dbReference type="NCBIfam" id="TIGR00465">
    <property type="entry name" value="ilvC"/>
    <property type="match status" value="1"/>
</dbReference>
<dbReference type="NCBIfam" id="NF004017">
    <property type="entry name" value="PRK05479.1"/>
    <property type="match status" value="1"/>
</dbReference>
<dbReference type="NCBIfam" id="NF009940">
    <property type="entry name" value="PRK13403.1"/>
    <property type="match status" value="1"/>
</dbReference>
<dbReference type="PANTHER" id="PTHR21371">
    <property type="entry name" value="KETOL-ACID REDUCTOISOMERASE, MITOCHONDRIAL"/>
    <property type="match status" value="1"/>
</dbReference>
<dbReference type="PANTHER" id="PTHR21371:SF1">
    <property type="entry name" value="KETOL-ACID REDUCTOISOMERASE, MITOCHONDRIAL"/>
    <property type="match status" value="1"/>
</dbReference>
<dbReference type="Pfam" id="PF01450">
    <property type="entry name" value="KARI_C"/>
    <property type="match status" value="1"/>
</dbReference>
<dbReference type="Pfam" id="PF07991">
    <property type="entry name" value="KARI_N"/>
    <property type="match status" value="1"/>
</dbReference>
<dbReference type="PIRSF" id="PIRSF000116">
    <property type="entry name" value="IlvC_gammaproteo"/>
    <property type="match status" value="1"/>
</dbReference>
<dbReference type="SUPFAM" id="SSF48179">
    <property type="entry name" value="6-phosphogluconate dehydrogenase C-terminal domain-like"/>
    <property type="match status" value="1"/>
</dbReference>
<dbReference type="SUPFAM" id="SSF51735">
    <property type="entry name" value="NAD(P)-binding Rossmann-fold domains"/>
    <property type="match status" value="1"/>
</dbReference>
<dbReference type="PROSITE" id="PS51851">
    <property type="entry name" value="KARI_C"/>
    <property type="match status" value="1"/>
</dbReference>
<dbReference type="PROSITE" id="PS51850">
    <property type="entry name" value="KARI_N"/>
    <property type="match status" value="1"/>
</dbReference>
<sequence>MAVIYYDKDADLELIRDKKIAIIGYGSQGHAHALNLKDSGLNVVVGLREGSKSWKKAEEQGLTVKAIEEAAKEADIIMMLIPDENQPEIYKKYIEKHLTEGKMLMFAHGFNIHYHQIIPPKNVDVTMIAPKSPGHIVRREYVEGRGVPALVAVYQDYTGKAKDIALAYAKGIGVTRAGVIETTFKEETETDLFGEQAVLCGGVTALIKAGFETLVEAGYQPEIAYFECLNELKLIVDLIYEGGLSFMRYSVSNTAEYGDYISQEKIVTKEVRENMKQMLKDIQTGKFAKDWILENQAGRPYFYTMRKKESEHLIEKVGKELRKMMPWLKERNVDEE</sequence>
<accession>A5IJM5</accession>
<name>ILVC_THEP1</name>